<gene>
    <name evidence="1" type="primary">glpK</name>
    <name type="ordered locus">E2348C_4230</name>
</gene>
<evidence type="ECO:0000255" key="1">
    <source>
        <dbReference type="HAMAP-Rule" id="MF_00186"/>
    </source>
</evidence>
<accession>B7UNP6</accession>
<reference key="1">
    <citation type="journal article" date="2009" name="J. Bacteriol.">
        <title>Complete genome sequence and comparative genome analysis of enteropathogenic Escherichia coli O127:H6 strain E2348/69.</title>
        <authorList>
            <person name="Iguchi A."/>
            <person name="Thomson N.R."/>
            <person name="Ogura Y."/>
            <person name="Saunders D."/>
            <person name="Ooka T."/>
            <person name="Henderson I.R."/>
            <person name="Harris D."/>
            <person name="Asadulghani M."/>
            <person name="Kurokawa K."/>
            <person name="Dean P."/>
            <person name="Kenny B."/>
            <person name="Quail M.A."/>
            <person name="Thurston S."/>
            <person name="Dougan G."/>
            <person name="Hayashi T."/>
            <person name="Parkhill J."/>
            <person name="Frankel G."/>
        </authorList>
    </citation>
    <scope>NUCLEOTIDE SEQUENCE [LARGE SCALE GENOMIC DNA]</scope>
    <source>
        <strain>E2348/69 / EPEC</strain>
    </source>
</reference>
<dbReference type="EC" id="2.7.1.30" evidence="1"/>
<dbReference type="EMBL" id="FM180568">
    <property type="protein sequence ID" value="CAS11778.1"/>
    <property type="molecule type" value="Genomic_DNA"/>
</dbReference>
<dbReference type="RefSeq" id="WP_000136804.1">
    <property type="nucleotide sequence ID" value="NC_011601.1"/>
</dbReference>
<dbReference type="SMR" id="B7UNP6"/>
<dbReference type="KEGG" id="ecg:E2348C_4230"/>
<dbReference type="HOGENOM" id="CLU_009281_2_3_6"/>
<dbReference type="UniPathway" id="UPA00618">
    <property type="reaction ID" value="UER00672"/>
</dbReference>
<dbReference type="Proteomes" id="UP000008205">
    <property type="component" value="Chromosome"/>
</dbReference>
<dbReference type="GO" id="GO:0005829">
    <property type="term" value="C:cytosol"/>
    <property type="evidence" value="ECO:0007669"/>
    <property type="project" value="TreeGrafter"/>
</dbReference>
<dbReference type="GO" id="GO:0005524">
    <property type="term" value="F:ATP binding"/>
    <property type="evidence" value="ECO:0007669"/>
    <property type="project" value="UniProtKB-UniRule"/>
</dbReference>
<dbReference type="GO" id="GO:0004370">
    <property type="term" value="F:glycerol kinase activity"/>
    <property type="evidence" value="ECO:0000250"/>
    <property type="project" value="UniProtKB"/>
</dbReference>
<dbReference type="GO" id="GO:0046872">
    <property type="term" value="F:metal ion binding"/>
    <property type="evidence" value="ECO:0007669"/>
    <property type="project" value="UniProtKB-KW"/>
</dbReference>
<dbReference type="GO" id="GO:0019563">
    <property type="term" value="P:glycerol catabolic process"/>
    <property type="evidence" value="ECO:0007669"/>
    <property type="project" value="UniProtKB-UniRule"/>
</dbReference>
<dbReference type="GO" id="GO:0006071">
    <property type="term" value="P:glycerol metabolic process"/>
    <property type="evidence" value="ECO:0000250"/>
    <property type="project" value="UniProtKB"/>
</dbReference>
<dbReference type="GO" id="GO:0006072">
    <property type="term" value="P:glycerol-3-phosphate metabolic process"/>
    <property type="evidence" value="ECO:0007669"/>
    <property type="project" value="InterPro"/>
</dbReference>
<dbReference type="CDD" id="cd07786">
    <property type="entry name" value="FGGY_EcGK_like"/>
    <property type="match status" value="1"/>
</dbReference>
<dbReference type="FunFam" id="3.30.420.40:FF:000007">
    <property type="entry name" value="Glycerol kinase"/>
    <property type="match status" value="1"/>
</dbReference>
<dbReference type="FunFam" id="3.30.420.40:FF:000008">
    <property type="entry name" value="Glycerol kinase"/>
    <property type="match status" value="1"/>
</dbReference>
<dbReference type="Gene3D" id="3.30.420.40">
    <property type="match status" value="2"/>
</dbReference>
<dbReference type="HAMAP" id="MF_00186">
    <property type="entry name" value="Glycerol_kin"/>
    <property type="match status" value="1"/>
</dbReference>
<dbReference type="InterPro" id="IPR043129">
    <property type="entry name" value="ATPase_NBD"/>
</dbReference>
<dbReference type="InterPro" id="IPR000577">
    <property type="entry name" value="Carb_kinase_FGGY"/>
</dbReference>
<dbReference type="InterPro" id="IPR018483">
    <property type="entry name" value="Carb_kinase_FGGY_CS"/>
</dbReference>
<dbReference type="InterPro" id="IPR018485">
    <property type="entry name" value="FGGY_C"/>
</dbReference>
<dbReference type="InterPro" id="IPR018484">
    <property type="entry name" value="FGGY_N"/>
</dbReference>
<dbReference type="InterPro" id="IPR005999">
    <property type="entry name" value="Glycerol_kin"/>
</dbReference>
<dbReference type="NCBIfam" id="TIGR01311">
    <property type="entry name" value="glycerol_kin"/>
    <property type="match status" value="1"/>
</dbReference>
<dbReference type="NCBIfam" id="NF000756">
    <property type="entry name" value="PRK00047.1"/>
    <property type="match status" value="1"/>
</dbReference>
<dbReference type="PANTHER" id="PTHR10196:SF69">
    <property type="entry name" value="GLYCEROL KINASE"/>
    <property type="match status" value="1"/>
</dbReference>
<dbReference type="PANTHER" id="PTHR10196">
    <property type="entry name" value="SUGAR KINASE"/>
    <property type="match status" value="1"/>
</dbReference>
<dbReference type="Pfam" id="PF02782">
    <property type="entry name" value="FGGY_C"/>
    <property type="match status" value="1"/>
</dbReference>
<dbReference type="Pfam" id="PF00370">
    <property type="entry name" value="FGGY_N"/>
    <property type="match status" value="1"/>
</dbReference>
<dbReference type="PIRSF" id="PIRSF000538">
    <property type="entry name" value="GlpK"/>
    <property type="match status" value="1"/>
</dbReference>
<dbReference type="SUPFAM" id="SSF53067">
    <property type="entry name" value="Actin-like ATPase domain"/>
    <property type="match status" value="2"/>
</dbReference>
<dbReference type="PROSITE" id="PS00933">
    <property type="entry name" value="FGGY_KINASES_1"/>
    <property type="match status" value="1"/>
</dbReference>
<dbReference type="PROSITE" id="PS00445">
    <property type="entry name" value="FGGY_KINASES_2"/>
    <property type="match status" value="1"/>
</dbReference>
<sequence length="502" mass="56290">MTEKKYIVALDQGTTSSRAVVMDHDANIISVSQREFEQIYPKPGWVEHDPMEIWATQSSTLVEVLAKADISSDQIAAIGITNQRETTIVWEKETGKPIYNAIVWQCRRTAEICEHLKRDGMEEYIRNNTGLVIDPYFSGTKVKWILDHVEGSRERARRGELLFGTVDTWLIWKMTQGRVHVTDYTNASRTMLFNIHTLDWDDKMLEVLDIPREMLPEVRRSSEVYGQTNIGGKGGTRIPISGIAGDQQAALFGQLCVKEGMAKNTYGTGCFMLMNTGEKAVKSENGLLTTIACGPTGEVNYALEGAVFMAGASIQWLRDEMKLINDAYDSEYFATKVQNTNGVYVVPAFTGLGAPYWDPYARGAIFGLTRGVNANHIIRATLESIAYQTRDVLEAMQADSGIRLHALRVDGGAVANNFLMQFQSDILGTRVERPEVREVTALGAAYLAGLAVGFWQNLDELQEKAVIEREFRPGIETTERNYRYAGWKKAVKRAMAWEEHDE</sequence>
<organism>
    <name type="scientific">Escherichia coli O127:H6 (strain E2348/69 / EPEC)</name>
    <dbReference type="NCBI Taxonomy" id="574521"/>
    <lineage>
        <taxon>Bacteria</taxon>
        <taxon>Pseudomonadati</taxon>
        <taxon>Pseudomonadota</taxon>
        <taxon>Gammaproteobacteria</taxon>
        <taxon>Enterobacterales</taxon>
        <taxon>Enterobacteriaceae</taxon>
        <taxon>Escherichia</taxon>
    </lineage>
</organism>
<protein>
    <recommendedName>
        <fullName evidence="1">Glycerol kinase</fullName>
        <ecNumber evidence="1">2.7.1.30</ecNumber>
    </recommendedName>
    <alternativeName>
        <fullName evidence="1">ATP:glycerol 3-phosphotransferase</fullName>
    </alternativeName>
    <alternativeName>
        <fullName evidence="1">Glycerokinase</fullName>
        <shortName evidence="1">GK</shortName>
    </alternativeName>
</protein>
<proteinExistence type="inferred from homology"/>
<feature type="chain" id="PRO_1000124192" description="Glycerol kinase">
    <location>
        <begin position="1"/>
        <end position="502"/>
    </location>
</feature>
<feature type="binding site" evidence="1">
    <location>
        <position position="14"/>
    </location>
    <ligand>
        <name>ADP</name>
        <dbReference type="ChEBI" id="CHEBI:456216"/>
    </ligand>
</feature>
<feature type="binding site" evidence="1">
    <location>
        <position position="14"/>
    </location>
    <ligand>
        <name>ATP</name>
        <dbReference type="ChEBI" id="CHEBI:30616"/>
    </ligand>
</feature>
<feature type="binding site" evidence="1">
    <location>
        <position position="14"/>
    </location>
    <ligand>
        <name>sn-glycerol 3-phosphate</name>
        <dbReference type="ChEBI" id="CHEBI:57597"/>
    </ligand>
</feature>
<feature type="binding site" evidence="1">
    <location>
        <position position="15"/>
    </location>
    <ligand>
        <name>ATP</name>
        <dbReference type="ChEBI" id="CHEBI:30616"/>
    </ligand>
</feature>
<feature type="binding site" evidence="1">
    <location>
        <position position="16"/>
    </location>
    <ligand>
        <name>ATP</name>
        <dbReference type="ChEBI" id="CHEBI:30616"/>
    </ligand>
</feature>
<feature type="binding site" evidence="1">
    <location>
        <position position="18"/>
    </location>
    <ligand>
        <name>ADP</name>
        <dbReference type="ChEBI" id="CHEBI:456216"/>
    </ligand>
</feature>
<feature type="binding site" evidence="1">
    <location>
        <position position="84"/>
    </location>
    <ligand>
        <name>glycerol</name>
        <dbReference type="ChEBI" id="CHEBI:17754"/>
    </ligand>
</feature>
<feature type="binding site" evidence="1">
    <location>
        <position position="84"/>
    </location>
    <ligand>
        <name>sn-glycerol 3-phosphate</name>
        <dbReference type="ChEBI" id="CHEBI:57597"/>
    </ligand>
</feature>
<feature type="binding site" evidence="1">
    <location>
        <position position="85"/>
    </location>
    <ligand>
        <name>glycerol</name>
        <dbReference type="ChEBI" id="CHEBI:17754"/>
    </ligand>
</feature>
<feature type="binding site" evidence="1">
    <location>
        <position position="85"/>
    </location>
    <ligand>
        <name>sn-glycerol 3-phosphate</name>
        <dbReference type="ChEBI" id="CHEBI:57597"/>
    </ligand>
</feature>
<feature type="binding site" evidence="1">
    <location>
        <position position="136"/>
    </location>
    <ligand>
        <name>glycerol</name>
        <dbReference type="ChEBI" id="CHEBI:17754"/>
    </ligand>
</feature>
<feature type="binding site" evidence="1">
    <location>
        <position position="136"/>
    </location>
    <ligand>
        <name>sn-glycerol 3-phosphate</name>
        <dbReference type="ChEBI" id="CHEBI:57597"/>
    </ligand>
</feature>
<feature type="binding site" evidence="1">
    <location>
        <position position="246"/>
    </location>
    <ligand>
        <name>glycerol</name>
        <dbReference type="ChEBI" id="CHEBI:17754"/>
    </ligand>
</feature>
<feature type="binding site" evidence="1">
    <location>
        <position position="246"/>
    </location>
    <ligand>
        <name>sn-glycerol 3-phosphate</name>
        <dbReference type="ChEBI" id="CHEBI:57597"/>
    </ligand>
</feature>
<feature type="binding site" evidence="1">
    <location>
        <position position="247"/>
    </location>
    <ligand>
        <name>glycerol</name>
        <dbReference type="ChEBI" id="CHEBI:17754"/>
    </ligand>
</feature>
<feature type="binding site" evidence="1">
    <location>
        <position position="268"/>
    </location>
    <ligand>
        <name>ADP</name>
        <dbReference type="ChEBI" id="CHEBI:456216"/>
    </ligand>
</feature>
<feature type="binding site" evidence="1">
    <location>
        <position position="268"/>
    </location>
    <ligand>
        <name>ATP</name>
        <dbReference type="ChEBI" id="CHEBI:30616"/>
    </ligand>
</feature>
<feature type="binding site" evidence="1">
    <location>
        <position position="311"/>
    </location>
    <ligand>
        <name>ADP</name>
        <dbReference type="ChEBI" id="CHEBI:456216"/>
    </ligand>
</feature>
<feature type="binding site" evidence="1">
    <location>
        <position position="311"/>
    </location>
    <ligand>
        <name>ATP</name>
        <dbReference type="ChEBI" id="CHEBI:30616"/>
    </ligand>
</feature>
<feature type="binding site" evidence="1">
    <location>
        <position position="315"/>
    </location>
    <ligand>
        <name>ATP</name>
        <dbReference type="ChEBI" id="CHEBI:30616"/>
    </ligand>
</feature>
<feature type="binding site" evidence="1">
    <location>
        <position position="412"/>
    </location>
    <ligand>
        <name>ADP</name>
        <dbReference type="ChEBI" id="CHEBI:456216"/>
    </ligand>
</feature>
<feature type="binding site" evidence="1">
    <location>
        <position position="412"/>
    </location>
    <ligand>
        <name>ATP</name>
        <dbReference type="ChEBI" id="CHEBI:30616"/>
    </ligand>
</feature>
<feature type="binding site" evidence="1">
    <location>
        <position position="416"/>
    </location>
    <ligand>
        <name>ADP</name>
        <dbReference type="ChEBI" id="CHEBI:456216"/>
    </ligand>
</feature>
<name>GLPK_ECO27</name>
<keyword id="KW-0021">Allosteric enzyme</keyword>
<keyword id="KW-0067">ATP-binding</keyword>
<keyword id="KW-0319">Glycerol metabolism</keyword>
<keyword id="KW-0418">Kinase</keyword>
<keyword id="KW-0479">Metal-binding</keyword>
<keyword id="KW-0547">Nucleotide-binding</keyword>
<keyword id="KW-1185">Reference proteome</keyword>
<keyword id="KW-0808">Transferase</keyword>
<keyword id="KW-0862">Zinc</keyword>
<comment type="function">
    <text evidence="1">Key enzyme in the regulation of glycerol uptake and metabolism. Catalyzes the phosphorylation of glycerol to yield sn-glycerol 3-phosphate.</text>
</comment>
<comment type="catalytic activity">
    <reaction evidence="1">
        <text>glycerol + ATP = sn-glycerol 3-phosphate + ADP + H(+)</text>
        <dbReference type="Rhea" id="RHEA:21644"/>
        <dbReference type="ChEBI" id="CHEBI:15378"/>
        <dbReference type="ChEBI" id="CHEBI:17754"/>
        <dbReference type="ChEBI" id="CHEBI:30616"/>
        <dbReference type="ChEBI" id="CHEBI:57597"/>
        <dbReference type="ChEBI" id="CHEBI:456216"/>
        <dbReference type="EC" id="2.7.1.30"/>
    </reaction>
</comment>
<comment type="activity regulation">
    <text evidence="1">Activity of this regulatory enzyme is affected by several metabolites. Allosterically and non-competitively inhibited by fructose 1,6-bisphosphate (FBP) and unphosphorylated phosphocarrier protein EIIA-Glc (III-Glc), an integral component of the bacterial phosphotransferase (PTS) system.</text>
</comment>
<comment type="pathway">
    <text evidence="1">Polyol metabolism; glycerol degradation via glycerol kinase pathway; sn-glycerol 3-phosphate from glycerol: step 1/1.</text>
</comment>
<comment type="subunit">
    <text evidence="1">Homotetramer and homodimer (in equilibrium). Heterodimer with EIIA-Glc. Binds 1 zinc ion per glycerol kinase EIIA-Glc dimer. The zinc ion is important for dimerization.</text>
</comment>
<comment type="similarity">
    <text evidence="1">Belongs to the FGGY kinase family.</text>
</comment>